<evidence type="ECO:0000255" key="1">
    <source>
        <dbReference type="HAMAP-Rule" id="MF_01315"/>
    </source>
</evidence>
<evidence type="ECO:0000256" key="2">
    <source>
        <dbReference type="SAM" id="MobiDB-lite"/>
    </source>
</evidence>
<evidence type="ECO:0000305" key="3"/>
<reference key="1">
    <citation type="journal article" date="2003" name="Nature">
        <title>The genome of a motile marine Synechococcus.</title>
        <authorList>
            <person name="Palenik B."/>
            <person name="Brahamsha B."/>
            <person name="Larimer F.W."/>
            <person name="Land M.L."/>
            <person name="Hauser L."/>
            <person name="Chain P."/>
            <person name="Lamerdin J.E."/>
            <person name="Regala W."/>
            <person name="Allen E.E."/>
            <person name="McCarren J."/>
            <person name="Paulsen I.T."/>
            <person name="Dufresne A."/>
            <person name="Partensky F."/>
            <person name="Webb E.A."/>
            <person name="Waterbury J."/>
        </authorList>
    </citation>
    <scope>NUCLEOTIDE SEQUENCE [LARGE SCALE GENOMIC DNA]</scope>
    <source>
        <strain>WH8102</strain>
    </source>
</reference>
<proteinExistence type="inferred from homology"/>
<dbReference type="EMBL" id="BX569694">
    <property type="protein sequence ID" value="CAE08603.1"/>
    <property type="molecule type" value="Genomic_DNA"/>
</dbReference>
<dbReference type="RefSeq" id="WP_011128945.1">
    <property type="nucleotide sequence ID" value="NC_005070.1"/>
</dbReference>
<dbReference type="SMR" id="Q7U4H9"/>
<dbReference type="STRING" id="84588.SYNW2088"/>
<dbReference type="KEGG" id="syw:SYNW2088"/>
<dbReference type="eggNOG" id="COG0099">
    <property type="taxonomic scope" value="Bacteria"/>
</dbReference>
<dbReference type="HOGENOM" id="CLU_103849_1_2_3"/>
<dbReference type="Proteomes" id="UP000001422">
    <property type="component" value="Chromosome"/>
</dbReference>
<dbReference type="GO" id="GO:0005829">
    <property type="term" value="C:cytosol"/>
    <property type="evidence" value="ECO:0007669"/>
    <property type="project" value="TreeGrafter"/>
</dbReference>
<dbReference type="GO" id="GO:0015935">
    <property type="term" value="C:small ribosomal subunit"/>
    <property type="evidence" value="ECO:0007669"/>
    <property type="project" value="TreeGrafter"/>
</dbReference>
<dbReference type="GO" id="GO:0019843">
    <property type="term" value="F:rRNA binding"/>
    <property type="evidence" value="ECO:0007669"/>
    <property type="project" value="UniProtKB-UniRule"/>
</dbReference>
<dbReference type="GO" id="GO:0003735">
    <property type="term" value="F:structural constituent of ribosome"/>
    <property type="evidence" value="ECO:0007669"/>
    <property type="project" value="InterPro"/>
</dbReference>
<dbReference type="GO" id="GO:0000049">
    <property type="term" value="F:tRNA binding"/>
    <property type="evidence" value="ECO:0007669"/>
    <property type="project" value="UniProtKB-UniRule"/>
</dbReference>
<dbReference type="GO" id="GO:0006412">
    <property type="term" value="P:translation"/>
    <property type="evidence" value="ECO:0007669"/>
    <property type="project" value="UniProtKB-UniRule"/>
</dbReference>
<dbReference type="FunFam" id="1.10.8.50:FF:000001">
    <property type="entry name" value="30S ribosomal protein S13"/>
    <property type="match status" value="1"/>
</dbReference>
<dbReference type="Gene3D" id="1.10.8.50">
    <property type="match status" value="1"/>
</dbReference>
<dbReference type="Gene3D" id="4.10.910.10">
    <property type="entry name" value="30s ribosomal protein s13, domain 2"/>
    <property type="match status" value="1"/>
</dbReference>
<dbReference type="HAMAP" id="MF_01315">
    <property type="entry name" value="Ribosomal_uS13"/>
    <property type="match status" value="1"/>
</dbReference>
<dbReference type="InterPro" id="IPR027437">
    <property type="entry name" value="Rbsml_uS13_C"/>
</dbReference>
<dbReference type="InterPro" id="IPR001892">
    <property type="entry name" value="Ribosomal_uS13"/>
</dbReference>
<dbReference type="InterPro" id="IPR010979">
    <property type="entry name" value="Ribosomal_uS13-like_H2TH"/>
</dbReference>
<dbReference type="InterPro" id="IPR019980">
    <property type="entry name" value="Ribosomal_uS13_bac-type"/>
</dbReference>
<dbReference type="InterPro" id="IPR018269">
    <property type="entry name" value="Ribosomal_uS13_CS"/>
</dbReference>
<dbReference type="NCBIfam" id="TIGR03631">
    <property type="entry name" value="uS13_bact"/>
    <property type="match status" value="1"/>
</dbReference>
<dbReference type="PANTHER" id="PTHR10871">
    <property type="entry name" value="30S RIBOSOMAL PROTEIN S13/40S RIBOSOMAL PROTEIN S18"/>
    <property type="match status" value="1"/>
</dbReference>
<dbReference type="PANTHER" id="PTHR10871:SF1">
    <property type="entry name" value="SMALL RIBOSOMAL SUBUNIT PROTEIN US13M"/>
    <property type="match status" value="1"/>
</dbReference>
<dbReference type="Pfam" id="PF00416">
    <property type="entry name" value="Ribosomal_S13"/>
    <property type="match status" value="1"/>
</dbReference>
<dbReference type="PIRSF" id="PIRSF002134">
    <property type="entry name" value="Ribosomal_S13"/>
    <property type="match status" value="1"/>
</dbReference>
<dbReference type="SUPFAM" id="SSF46946">
    <property type="entry name" value="S13-like H2TH domain"/>
    <property type="match status" value="1"/>
</dbReference>
<dbReference type="PROSITE" id="PS00646">
    <property type="entry name" value="RIBOSOMAL_S13_1"/>
    <property type="match status" value="1"/>
</dbReference>
<dbReference type="PROSITE" id="PS50159">
    <property type="entry name" value="RIBOSOMAL_S13_2"/>
    <property type="match status" value="1"/>
</dbReference>
<feature type="chain" id="PRO_0000230573" description="Small ribosomal subunit protein uS13">
    <location>
        <begin position="1"/>
        <end position="121"/>
    </location>
</feature>
<feature type="region of interest" description="Disordered" evidence="2">
    <location>
        <begin position="97"/>
        <end position="121"/>
    </location>
</feature>
<feature type="compositionally biased region" description="Basic residues" evidence="2">
    <location>
        <begin position="100"/>
        <end position="121"/>
    </location>
</feature>
<gene>
    <name evidence="1" type="primary">rpsM</name>
    <name evidence="1" type="synonym">rps13</name>
    <name type="ordered locus">SYNW2088</name>
</gene>
<comment type="function">
    <text evidence="1">Located at the top of the head of the 30S subunit, it contacts several helices of the 16S rRNA. In the 70S ribosome it contacts the 23S rRNA (bridge B1a) and protein L5 of the 50S subunit (bridge B1b), connecting the 2 subunits; these bridges are implicated in subunit movement. Contacts the tRNAs in the A and P-sites.</text>
</comment>
<comment type="subunit">
    <text evidence="1">Part of the 30S ribosomal subunit. Forms a loose heterodimer with protein S19. Forms two bridges to the 50S subunit in the 70S ribosome.</text>
</comment>
<comment type="similarity">
    <text evidence="1">Belongs to the universal ribosomal protein uS13 family.</text>
</comment>
<protein>
    <recommendedName>
        <fullName evidence="1">Small ribosomal subunit protein uS13</fullName>
    </recommendedName>
    <alternativeName>
        <fullName evidence="3">30S ribosomal protein S13</fullName>
    </alternativeName>
</protein>
<keyword id="KW-0687">Ribonucleoprotein</keyword>
<keyword id="KW-0689">Ribosomal protein</keyword>
<keyword id="KW-0694">RNA-binding</keyword>
<keyword id="KW-0699">rRNA-binding</keyword>
<keyword id="KW-0820">tRNA-binding</keyword>
<accession>Q7U4H9</accession>
<organism>
    <name type="scientific">Parasynechococcus marenigrum (strain WH8102)</name>
    <dbReference type="NCBI Taxonomy" id="84588"/>
    <lineage>
        <taxon>Bacteria</taxon>
        <taxon>Bacillati</taxon>
        <taxon>Cyanobacteriota</taxon>
        <taxon>Cyanophyceae</taxon>
        <taxon>Synechococcales</taxon>
        <taxon>Prochlorococcaceae</taxon>
        <taxon>Parasynechococcus</taxon>
        <taxon>Parasynechococcus marenigrum</taxon>
    </lineage>
</organism>
<sequence>MARIAGVDIPRDKRVEVSLTYIYGVGPTRARTILAQTGVSPDIRVKDLEDGDLQKLRNAADDFTLEGDLRRQEGMALKRLQDIGCVRGRRHRMSLPVRGQRTRTNARTRRGARKTVAGKKK</sequence>
<name>RS13_PARMW</name>